<keyword id="KW-0963">Cytoplasm</keyword>
<keyword id="KW-0489">Methyltransferase</keyword>
<keyword id="KW-1185">Reference proteome</keyword>
<keyword id="KW-0698">rRNA processing</keyword>
<keyword id="KW-0949">S-adenosyl-L-methionine</keyword>
<keyword id="KW-0808">Transferase</keyword>
<protein>
    <recommendedName>
        <fullName evidence="1">Ribosomal RNA small subunit methyltransferase H</fullName>
        <ecNumber evidence="1">2.1.1.199</ecNumber>
    </recommendedName>
    <alternativeName>
        <fullName evidence="1">16S rRNA m(4)C1402 methyltransferase</fullName>
    </alternativeName>
    <alternativeName>
        <fullName evidence="1">rRNA (cytosine-N(4)-)-methyltransferase RsmH</fullName>
    </alternativeName>
</protein>
<feature type="chain" id="PRO_0000223530" description="Ribosomal RNA small subunit methyltransferase H">
    <location>
        <begin position="1"/>
        <end position="329"/>
    </location>
</feature>
<feature type="binding site" evidence="1">
    <location>
        <begin position="47"/>
        <end position="49"/>
    </location>
    <ligand>
        <name>S-adenosyl-L-methionine</name>
        <dbReference type="ChEBI" id="CHEBI:59789"/>
    </ligand>
</feature>
<feature type="binding site" evidence="1">
    <location>
        <position position="67"/>
    </location>
    <ligand>
        <name>S-adenosyl-L-methionine</name>
        <dbReference type="ChEBI" id="CHEBI:59789"/>
    </ligand>
</feature>
<feature type="binding site" evidence="1">
    <location>
        <position position="93"/>
    </location>
    <ligand>
        <name>S-adenosyl-L-methionine</name>
        <dbReference type="ChEBI" id="CHEBI:59789"/>
    </ligand>
</feature>
<feature type="binding site" evidence="1">
    <location>
        <position position="115"/>
    </location>
    <ligand>
        <name>S-adenosyl-L-methionine</name>
        <dbReference type="ChEBI" id="CHEBI:59789"/>
    </ligand>
</feature>
<feature type="binding site" evidence="1">
    <location>
        <position position="122"/>
    </location>
    <ligand>
        <name>S-adenosyl-L-methionine</name>
        <dbReference type="ChEBI" id="CHEBI:59789"/>
    </ligand>
</feature>
<dbReference type="EC" id="2.1.1.199" evidence="1"/>
<dbReference type="EMBL" id="CP000016">
    <property type="protein sequence ID" value="AAZ40778.1"/>
    <property type="molecule type" value="Genomic_DNA"/>
</dbReference>
<dbReference type="SMR" id="Q493Q9"/>
<dbReference type="STRING" id="291272.BPEN_138"/>
<dbReference type="KEGG" id="bpn:BPEN_138"/>
<dbReference type="eggNOG" id="COG0275">
    <property type="taxonomic scope" value="Bacteria"/>
</dbReference>
<dbReference type="HOGENOM" id="CLU_038422_2_0_6"/>
<dbReference type="Proteomes" id="UP000007794">
    <property type="component" value="Chromosome"/>
</dbReference>
<dbReference type="GO" id="GO:0005737">
    <property type="term" value="C:cytoplasm"/>
    <property type="evidence" value="ECO:0007669"/>
    <property type="project" value="UniProtKB-SubCell"/>
</dbReference>
<dbReference type="GO" id="GO:0071424">
    <property type="term" value="F:rRNA (cytosine-N4-)-methyltransferase activity"/>
    <property type="evidence" value="ECO:0007669"/>
    <property type="project" value="UniProtKB-UniRule"/>
</dbReference>
<dbReference type="GO" id="GO:0070475">
    <property type="term" value="P:rRNA base methylation"/>
    <property type="evidence" value="ECO:0007669"/>
    <property type="project" value="UniProtKB-UniRule"/>
</dbReference>
<dbReference type="Gene3D" id="1.10.150.170">
    <property type="entry name" value="Putative methyltransferase TM0872, insert domain"/>
    <property type="match status" value="1"/>
</dbReference>
<dbReference type="Gene3D" id="3.40.50.150">
    <property type="entry name" value="Vaccinia Virus protein VP39"/>
    <property type="match status" value="1"/>
</dbReference>
<dbReference type="HAMAP" id="MF_01007">
    <property type="entry name" value="16SrRNA_methyltr_H"/>
    <property type="match status" value="1"/>
</dbReference>
<dbReference type="InterPro" id="IPR002903">
    <property type="entry name" value="RsmH"/>
</dbReference>
<dbReference type="InterPro" id="IPR023397">
    <property type="entry name" value="SAM-dep_MeTrfase_MraW_recog"/>
</dbReference>
<dbReference type="InterPro" id="IPR029063">
    <property type="entry name" value="SAM-dependent_MTases_sf"/>
</dbReference>
<dbReference type="NCBIfam" id="TIGR00006">
    <property type="entry name" value="16S rRNA (cytosine(1402)-N(4))-methyltransferase RsmH"/>
    <property type="match status" value="1"/>
</dbReference>
<dbReference type="PANTHER" id="PTHR11265:SF0">
    <property type="entry name" value="12S RRNA N4-METHYLCYTIDINE METHYLTRANSFERASE"/>
    <property type="match status" value="1"/>
</dbReference>
<dbReference type="PANTHER" id="PTHR11265">
    <property type="entry name" value="S-ADENOSYL-METHYLTRANSFERASE MRAW"/>
    <property type="match status" value="1"/>
</dbReference>
<dbReference type="Pfam" id="PF01795">
    <property type="entry name" value="Methyltransf_5"/>
    <property type="match status" value="1"/>
</dbReference>
<dbReference type="PIRSF" id="PIRSF004486">
    <property type="entry name" value="MraW"/>
    <property type="match status" value="1"/>
</dbReference>
<dbReference type="SUPFAM" id="SSF81799">
    <property type="entry name" value="Putative methyltransferase TM0872, insert domain"/>
    <property type="match status" value="1"/>
</dbReference>
<dbReference type="SUPFAM" id="SSF53335">
    <property type="entry name" value="S-adenosyl-L-methionine-dependent methyltransferases"/>
    <property type="match status" value="1"/>
</dbReference>
<evidence type="ECO:0000255" key="1">
    <source>
        <dbReference type="HAMAP-Rule" id="MF_01007"/>
    </source>
</evidence>
<comment type="function">
    <text evidence="1">Specifically methylates the N4 position of cytidine in position 1402 (C1402) of 16S rRNA.</text>
</comment>
<comment type="catalytic activity">
    <reaction evidence="1">
        <text>cytidine(1402) in 16S rRNA + S-adenosyl-L-methionine = N(4)-methylcytidine(1402) in 16S rRNA + S-adenosyl-L-homocysteine + H(+)</text>
        <dbReference type="Rhea" id="RHEA:42928"/>
        <dbReference type="Rhea" id="RHEA-COMP:10286"/>
        <dbReference type="Rhea" id="RHEA-COMP:10287"/>
        <dbReference type="ChEBI" id="CHEBI:15378"/>
        <dbReference type="ChEBI" id="CHEBI:57856"/>
        <dbReference type="ChEBI" id="CHEBI:59789"/>
        <dbReference type="ChEBI" id="CHEBI:74506"/>
        <dbReference type="ChEBI" id="CHEBI:82748"/>
        <dbReference type="EC" id="2.1.1.199"/>
    </reaction>
</comment>
<comment type="subcellular location">
    <subcellularLocation>
        <location evidence="1">Cytoplasm</location>
    </subcellularLocation>
</comment>
<comment type="similarity">
    <text evidence="1">Belongs to the methyltransferase superfamily. RsmH family.</text>
</comment>
<name>RSMH_BLOPB</name>
<sequence>MCASVFFIIIYMFYIHYSHKSVLLNEAIQSLNIKATGMYIDGTFGSGGHSKLILSQLNKRGRLLAIDKDLLAVKIGKHIAEQDDRFTIIHSSFSKMINHVKNIGLIGSVDGILLDLGISTFQINDCSRGFSFMQDGLLDMRMDISSGISAAEWLSKASQENITWVLKNFGEERFAKNIAKILVSKRRYTPIIRSIVLSKLICDAIPHRNMNKHPATKSFLAIRMFINNELEEIMQVLKDALIILSPRGRLVVISFNSLEDRLVKYFIREHSCALSIPPKLPLTNNQIFSKYKNKCQLKNIGKLTPSKQEIKRNIRARSAILRCAEKLAI</sequence>
<accession>Q493Q9</accession>
<organism>
    <name type="scientific">Blochmanniella pennsylvanica (strain BPEN)</name>
    <dbReference type="NCBI Taxonomy" id="291272"/>
    <lineage>
        <taxon>Bacteria</taxon>
        <taxon>Pseudomonadati</taxon>
        <taxon>Pseudomonadota</taxon>
        <taxon>Gammaproteobacteria</taxon>
        <taxon>Enterobacterales</taxon>
        <taxon>Enterobacteriaceae</taxon>
        <taxon>ant endosymbionts</taxon>
        <taxon>Candidatus Blochmanniella</taxon>
    </lineage>
</organism>
<proteinExistence type="inferred from homology"/>
<reference key="1">
    <citation type="journal article" date="2005" name="Genome Res.">
        <title>Genome sequence of Blochmannia pennsylvanicus indicates parallel evolutionary trends among bacterial mutualists of insects.</title>
        <authorList>
            <person name="Degnan P.H."/>
            <person name="Lazarus A.B."/>
            <person name="Wernegreen J.J."/>
        </authorList>
    </citation>
    <scope>NUCLEOTIDE SEQUENCE [LARGE SCALE GENOMIC DNA]</scope>
    <source>
        <strain>BPEN</strain>
    </source>
</reference>
<gene>
    <name evidence="1" type="primary">rsmH</name>
    <name type="synonym">mraW</name>
    <name type="ordered locus">BPEN_138</name>
</gene>